<protein>
    <recommendedName>
        <fullName evidence="1 3">Coproheme decarboxylase</fullName>
        <ecNumber evidence="1">1.3.98.5</ecNumber>
    </recommendedName>
    <alternativeName>
        <fullName evidence="1 3">Coproheme III oxidative decarboxylase</fullName>
    </alternativeName>
    <alternativeName>
        <fullName evidence="1 3">Hydrogen peroxide-dependent heme synthase</fullName>
    </alternativeName>
</protein>
<keyword id="KW-0349">Heme</keyword>
<keyword id="KW-0350">Heme biosynthesis</keyword>
<keyword id="KW-0408">Iron</keyword>
<keyword id="KW-0479">Metal-binding</keyword>
<keyword id="KW-0560">Oxidoreductase</keyword>
<keyword id="KW-1185">Reference proteome</keyword>
<gene>
    <name evidence="1" type="primary">chdC</name>
    <name evidence="4" type="ordered locus">SCO6042</name>
</gene>
<dbReference type="EC" id="1.3.98.5" evidence="1"/>
<dbReference type="EMBL" id="AL939126">
    <property type="protein sequence ID" value="CAA18976.1"/>
    <property type="molecule type" value="Genomic_DNA"/>
</dbReference>
<dbReference type="PIR" id="T34680">
    <property type="entry name" value="T34680"/>
</dbReference>
<dbReference type="RefSeq" id="NP_630152.1">
    <property type="nucleotide sequence ID" value="NC_003888.3"/>
</dbReference>
<dbReference type="SMR" id="O69830"/>
<dbReference type="FunCoup" id="O69830">
    <property type="interactions" value="114"/>
</dbReference>
<dbReference type="STRING" id="100226.gene:17763701"/>
<dbReference type="PaxDb" id="100226-SCO6042"/>
<dbReference type="KEGG" id="sco:SCO6042"/>
<dbReference type="PATRIC" id="fig|100226.15.peg.6143"/>
<dbReference type="eggNOG" id="COG3253">
    <property type="taxonomic scope" value="Bacteria"/>
</dbReference>
<dbReference type="HOGENOM" id="CLU_076582_1_0_11"/>
<dbReference type="InParanoid" id="O69830"/>
<dbReference type="OrthoDB" id="9773646at2"/>
<dbReference type="PhylomeDB" id="O69830"/>
<dbReference type="UniPathway" id="UPA00252"/>
<dbReference type="Proteomes" id="UP000001973">
    <property type="component" value="Chromosome"/>
</dbReference>
<dbReference type="GO" id="GO:0020037">
    <property type="term" value="F:heme binding"/>
    <property type="evidence" value="ECO:0007669"/>
    <property type="project" value="InterPro"/>
</dbReference>
<dbReference type="GO" id="GO:0046872">
    <property type="term" value="F:metal ion binding"/>
    <property type="evidence" value="ECO:0007669"/>
    <property type="project" value="UniProtKB-KW"/>
</dbReference>
<dbReference type="GO" id="GO:0016634">
    <property type="term" value="F:oxidoreductase activity, acting on the CH-CH group of donors, oxygen as acceptor"/>
    <property type="evidence" value="ECO:0007669"/>
    <property type="project" value="UniProtKB-UniRule"/>
</dbReference>
<dbReference type="GO" id="GO:0006785">
    <property type="term" value="P:heme B biosynthetic process"/>
    <property type="evidence" value="ECO:0007669"/>
    <property type="project" value="UniProtKB-UniRule"/>
</dbReference>
<dbReference type="Gene3D" id="3.30.70.1030">
    <property type="entry name" value="Apc35880, domain 1"/>
    <property type="match status" value="2"/>
</dbReference>
<dbReference type="HAMAP" id="MF_02244">
    <property type="entry name" value="Coproheme_decarbox_2"/>
    <property type="match status" value="1"/>
</dbReference>
<dbReference type="InterPro" id="IPR010644">
    <property type="entry name" value="ChdC/CLD"/>
</dbReference>
<dbReference type="InterPro" id="IPR011008">
    <property type="entry name" value="Dimeric_a/b-barrel"/>
</dbReference>
<dbReference type="NCBIfam" id="NF042928">
    <property type="entry name" value="HemQ_actino"/>
    <property type="match status" value="1"/>
</dbReference>
<dbReference type="PANTHER" id="PTHR36843:SF1">
    <property type="entry name" value="COPROHEME DECARBOXYLASE"/>
    <property type="match status" value="1"/>
</dbReference>
<dbReference type="PANTHER" id="PTHR36843">
    <property type="entry name" value="HEME-DEPENDENT PEROXIDASE YWFI-RELATED"/>
    <property type="match status" value="1"/>
</dbReference>
<dbReference type="Pfam" id="PF06778">
    <property type="entry name" value="Chlor_dismutase"/>
    <property type="match status" value="1"/>
</dbReference>
<dbReference type="SUPFAM" id="SSF54909">
    <property type="entry name" value="Dimeric alpha+beta barrel"/>
    <property type="match status" value="1"/>
</dbReference>
<name>CHDC_STRCO</name>
<feature type="chain" id="PRO_0000450277" description="Coproheme decarboxylase">
    <location>
        <begin position="1"/>
        <end position="243"/>
    </location>
</feature>
<feature type="active site" evidence="1">
    <location>
        <position position="145"/>
    </location>
</feature>
<feature type="binding site" description="axial binding residue" evidence="1">
    <location>
        <position position="168"/>
    </location>
    <ligand>
        <name>Fe-coproporphyrin III</name>
        <dbReference type="ChEBI" id="CHEBI:68438"/>
    </ligand>
    <ligandPart>
        <name>Fe</name>
        <dbReference type="ChEBI" id="CHEBI:18248"/>
    </ligandPart>
</feature>
<reference key="1">
    <citation type="journal article" date="2002" name="Nature">
        <title>Complete genome sequence of the model actinomycete Streptomyces coelicolor A3(2).</title>
        <authorList>
            <person name="Bentley S.D."/>
            <person name="Chater K.F."/>
            <person name="Cerdeno-Tarraga A.-M."/>
            <person name="Challis G.L."/>
            <person name="Thomson N.R."/>
            <person name="James K.D."/>
            <person name="Harris D.E."/>
            <person name="Quail M.A."/>
            <person name="Kieser H."/>
            <person name="Harper D."/>
            <person name="Bateman A."/>
            <person name="Brown S."/>
            <person name="Chandra G."/>
            <person name="Chen C.W."/>
            <person name="Collins M."/>
            <person name="Cronin A."/>
            <person name="Fraser A."/>
            <person name="Goble A."/>
            <person name="Hidalgo J."/>
            <person name="Hornsby T."/>
            <person name="Howarth S."/>
            <person name="Huang C.-H."/>
            <person name="Kieser T."/>
            <person name="Larke L."/>
            <person name="Murphy L.D."/>
            <person name="Oliver K."/>
            <person name="O'Neil S."/>
            <person name="Rabbinowitsch E."/>
            <person name="Rajandream M.A."/>
            <person name="Rutherford K.M."/>
            <person name="Rutter S."/>
            <person name="Seeger K."/>
            <person name="Saunders D."/>
            <person name="Sharp S."/>
            <person name="Squares R."/>
            <person name="Squares S."/>
            <person name="Taylor K."/>
            <person name="Warren T."/>
            <person name="Wietzorrek A."/>
            <person name="Woodward J.R."/>
            <person name="Barrell B.G."/>
            <person name="Parkhill J."/>
            <person name="Hopwood D.A."/>
        </authorList>
    </citation>
    <scope>NUCLEOTIDE SEQUENCE [LARGE SCALE GENOMIC DNA]</scope>
    <source>
        <strain>ATCC BAA-471 / A3(2) / M145</strain>
    </source>
</reference>
<reference key="2">
    <citation type="journal article" date="2010" name="J. Biol. Chem.">
        <title>Discovery and characterization of HemQ: an essential heme biosynthetic pathway component.</title>
        <authorList>
            <person name="Dailey T.A."/>
            <person name="Boynton T.O."/>
            <person name="Albetel A.N."/>
            <person name="Gerdes S."/>
            <person name="Johnson M.K."/>
            <person name="Dailey H.A."/>
        </authorList>
    </citation>
    <scope>PATHWAY</scope>
</reference>
<organism>
    <name type="scientific">Streptomyces coelicolor (strain ATCC BAA-471 / A3(2) / M145)</name>
    <dbReference type="NCBI Taxonomy" id="100226"/>
    <lineage>
        <taxon>Bacteria</taxon>
        <taxon>Bacillati</taxon>
        <taxon>Actinomycetota</taxon>
        <taxon>Actinomycetes</taxon>
        <taxon>Kitasatosporales</taxon>
        <taxon>Streptomycetaceae</taxon>
        <taxon>Streptomyces</taxon>
        <taxon>Streptomyces albidoflavus group</taxon>
    </lineage>
</organism>
<comment type="function">
    <text evidence="1">Involved in coproporphyrin-dependent heme b biosynthesis. Catalyzes the decarboxylation of Fe-coproporphyrin III (coproheme) to heme b (protoheme IX), the last step of the pathway. The reaction occurs in a stepwise manner with a three-propionate intermediate.</text>
</comment>
<comment type="catalytic activity">
    <reaction evidence="1">
        <text>Fe-coproporphyrin III + 2 H2O2 + 2 H(+) = heme b + 2 CO2 + 4 H2O</text>
        <dbReference type="Rhea" id="RHEA:56516"/>
        <dbReference type="ChEBI" id="CHEBI:15377"/>
        <dbReference type="ChEBI" id="CHEBI:15378"/>
        <dbReference type="ChEBI" id="CHEBI:16240"/>
        <dbReference type="ChEBI" id="CHEBI:16526"/>
        <dbReference type="ChEBI" id="CHEBI:60344"/>
        <dbReference type="ChEBI" id="CHEBI:68438"/>
        <dbReference type="EC" id="1.3.98.5"/>
    </reaction>
    <physiologicalReaction direction="left-to-right" evidence="1">
        <dbReference type="Rhea" id="RHEA:56517"/>
    </physiologicalReaction>
</comment>
<comment type="catalytic activity">
    <reaction evidence="1">
        <text>Fe-coproporphyrin III + H2O2 + H(+) = harderoheme III + CO2 + 2 H2O</text>
        <dbReference type="Rhea" id="RHEA:57940"/>
        <dbReference type="ChEBI" id="CHEBI:15377"/>
        <dbReference type="ChEBI" id="CHEBI:15378"/>
        <dbReference type="ChEBI" id="CHEBI:16240"/>
        <dbReference type="ChEBI" id="CHEBI:16526"/>
        <dbReference type="ChEBI" id="CHEBI:68438"/>
        <dbReference type="ChEBI" id="CHEBI:142463"/>
    </reaction>
    <physiologicalReaction direction="left-to-right" evidence="1">
        <dbReference type="Rhea" id="RHEA:57941"/>
    </physiologicalReaction>
</comment>
<comment type="catalytic activity">
    <reaction evidence="1">
        <text>harderoheme III + H2O2 + H(+) = heme b + CO2 + 2 H2O</text>
        <dbReference type="Rhea" id="RHEA:57944"/>
        <dbReference type="ChEBI" id="CHEBI:15377"/>
        <dbReference type="ChEBI" id="CHEBI:15378"/>
        <dbReference type="ChEBI" id="CHEBI:16240"/>
        <dbReference type="ChEBI" id="CHEBI:16526"/>
        <dbReference type="ChEBI" id="CHEBI:60344"/>
        <dbReference type="ChEBI" id="CHEBI:142463"/>
    </reaction>
    <physiologicalReaction direction="left-to-right" evidence="1">
        <dbReference type="Rhea" id="RHEA:57945"/>
    </physiologicalReaction>
</comment>
<comment type="cofactor">
    <cofactor evidence="1">
        <name>Fe-coproporphyrin III</name>
        <dbReference type="ChEBI" id="CHEBI:68438"/>
    </cofactor>
    <text evidence="1">Fe-coproporphyrin III acts both as a substrate and a redox cofactor.</text>
</comment>
<comment type="pathway">
    <text evidence="1 2">Porphyrin-containing compound metabolism; protoheme biosynthesis.</text>
</comment>
<comment type="similarity">
    <text evidence="1 3">Belongs to the ChdC family. Type 2 subfamily.</text>
</comment>
<proteinExistence type="inferred from homology"/>
<sequence>MSDDASTPAAERIPNKGKLAKDLNEVIRYTLWSVFKLKDTLPEDRAGYADEVQELFDQLAAKDVTIRGTYDLSGLRADADLMIWWHAETADQLQEAYNLFRRTKLGRALEPVWSNMALHRPAEFNRSHIPAFLADETPRNYISVYPFVRSYDWYLLPDEDRRRMLADHGKMARGYPDVRANTVASFSLGDYEWILAFEADELHRIVDLMRHLRGSEARRHVREEIPFYTGRRKDIGELVAGLA</sequence>
<accession>O69830</accession>
<evidence type="ECO:0000255" key="1">
    <source>
        <dbReference type="HAMAP-Rule" id="MF_02244"/>
    </source>
</evidence>
<evidence type="ECO:0000269" key="2">
    <source>
    </source>
</evidence>
<evidence type="ECO:0000305" key="3"/>
<evidence type="ECO:0000312" key="4">
    <source>
        <dbReference type="EMBL" id="CAA18976.1"/>
    </source>
</evidence>